<dbReference type="EC" id="4.2.3.50"/>
<dbReference type="EC" id="4.2.3.53"/>
<dbReference type="EC" id="4.2.3.54"/>
<dbReference type="EMBL" id="FJ194970">
    <property type="protein sequence ID" value="ACJ38409.1"/>
    <property type="molecule type" value="mRNA"/>
</dbReference>
<dbReference type="SMR" id="B8XA41"/>
<dbReference type="KEGG" id="ag:ACJ38409"/>
<dbReference type="BioCyc" id="MetaCyc:MONOMER-14819"/>
<dbReference type="BRENDA" id="4.2.3.50">
    <property type="organism ID" value="3102"/>
</dbReference>
<dbReference type="BRENDA" id="4.2.3.53">
    <property type="organism ID" value="3102"/>
</dbReference>
<dbReference type="BRENDA" id="4.2.3.54">
    <property type="organism ID" value="3102"/>
</dbReference>
<dbReference type="GO" id="GO:0009507">
    <property type="term" value="C:chloroplast"/>
    <property type="evidence" value="ECO:0007669"/>
    <property type="project" value="UniProtKB-SubCell"/>
</dbReference>
<dbReference type="GO" id="GO:0102062">
    <property type="term" value="F:alpha-santalene synthase activity"/>
    <property type="evidence" value="ECO:0007669"/>
    <property type="project" value="UniProtKB-EC"/>
</dbReference>
<dbReference type="GO" id="GO:0102060">
    <property type="term" value="F:endo-alpha-bergamotene synthase activity"/>
    <property type="evidence" value="ECO:0007669"/>
    <property type="project" value="UniProtKB-EC"/>
</dbReference>
<dbReference type="GO" id="GO:0102061">
    <property type="term" value="F:endo-beta-bergamotene synthase activity"/>
    <property type="evidence" value="ECO:0007669"/>
    <property type="project" value="UniProtKB-EC"/>
</dbReference>
<dbReference type="GO" id="GO:0000287">
    <property type="term" value="F:magnesium ion binding"/>
    <property type="evidence" value="ECO:0007669"/>
    <property type="project" value="InterPro"/>
</dbReference>
<dbReference type="GO" id="GO:0010333">
    <property type="term" value="F:terpene synthase activity"/>
    <property type="evidence" value="ECO:0007669"/>
    <property type="project" value="InterPro"/>
</dbReference>
<dbReference type="GO" id="GO:0009686">
    <property type="term" value="P:gibberellin biosynthetic process"/>
    <property type="evidence" value="ECO:0007669"/>
    <property type="project" value="TreeGrafter"/>
</dbReference>
<dbReference type="FunFam" id="1.10.600.10:FF:000036">
    <property type="entry name" value="cis-abienol synthase, chloroplastic"/>
    <property type="match status" value="1"/>
</dbReference>
<dbReference type="FunFam" id="1.50.10.130:FF:000002">
    <property type="entry name" value="Ent-copalyl diphosphate synthase, chloroplastic"/>
    <property type="match status" value="1"/>
</dbReference>
<dbReference type="Gene3D" id="1.50.10.160">
    <property type="match status" value="1"/>
</dbReference>
<dbReference type="Gene3D" id="1.10.600.10">
    <property type="entry name" value="Farnesyl Diphosphate Synthase"/>
    <property type="match status" value="1"/>
</dbReference>
<dbReference type="Gene3D" id="1.50.10.130">
    <property type="entry name" value="Terpene synthase, N-terminal domain"/>
    <property type="match status" value="1"/>
</dbReference>
<dbReference type="InterPro" id="IPR008949">
    <property type="entry name" value="Isoprenoid_synthase_dom_sf"/>
</dbReference>
<dbReference type="InterPro" id="IPR001906">
    <property type="entry name" value="Terpene_synth_N"/>
</dbReference>
<dbReference type="InterPro" id="IPR036965">
    <property type="entry name" value="Terpene_synth_N_sf"/>
</dbReference>
<dbReference type="InterPro" id="IPR050148">
    <property type="entry name" value="Terpene_synthase-like"/>
</dbReference>
<dbReference type="InterPro" id="IPR005630">
    <property type="entry name" value="Terpene_synthase_metal-bd"/>
</dbReference>
<dbReference type="InterPro" id="IPR008930">
    <property type="entry name" value="Terpenoid_cyclase/PrenylTrfase"/>
</dbReference>
<dbReference type="PANTHER" id="PTHR31739:SF33">
    <property type="entry name" value="CIS-ABIENOL SYNTHASE, CHLOROPLASTIC"/>
    <property type="match status" value="1"/>
</dbReference>
<dbReference type="PANTHER" id="PTHR31739">
    <property type="entry name" value="ENT-COPALYL DIPHOSPHATE SYNTHASE, CHLOROPLASTIC"/>
    <property type="match status" value="1"/>
</dbReference>
<dbReference type="Pfam" id="PF01397">
    <property type="entry name" value="Terpene_synth"/>
    <property type="match status" value="1"/>
</dbReference>
<dbReference type="Pfam" id="PF03936">
    <property type="entry name" value="Terpene_synth_C"/>
    <property type="match status" value="1"/>
</dbReference>
<dbReference type="SFLD" id="SFLDG01014">
    <property type="entry name" value="Terpene_Cyclase_Like_1_N-term"/>
    <property type="match status" value="1"/>
</dbReference>
<dbReference type="SUPFAM" id="SSF48239">
    <property type="entry name" value="Terpenoid cyclases/Protein prenyltransferases"/>
    <property type="match status" value="2"/>
</dbReference>
<dbReference type="SUPFAM" id="SSF48576">
    <property type="entry name" value="Terpenoid synthases"/>
    <property type="match status" value="1"/>
</dbReference>
<organism>
    <name type="scientific">Solanum habrochaites</name>
    <name type="common">Wild tomato</name>
    <name type="synonym">Lycopersicon hirsutum</name>
    <dbReference type="NCBI Taxonomy" id="62890"/>
    <lineage>
        <taxon>Eukaryota</taxon>
        <taxon>Viridiplantae</taxon>
        <taxon>Streptophyta</taxon>
        <taxon>Embryophyta</taxon>
        <taxon>Tracheophyta</taxon>
        <taxon>Spermatophyta</taxon>
        <taxon>Magnoliopsida</taxon>
        <taxon>eudicotyledons</taxon>
        <taxon>Gunneridae</taxon>
        <taxon>Pentapetalae</taxon>
        <taxon>asterids</taxon>
        <taxon>lamiids</taxon>
        <taxon>Solanales</taxon>
        <taxon>Solanaceae</taxon>
        <taxon>Solanoideae</taxon>
        <taxon>Solaneae</taxon>
        <taxon>Solanum</taxon>
        <taxon>Solanum subgen. Lycopersicon</taxon>
    </lineage>
</organism>
<feature type="transit peptide" description="Chloroplast" evidence="2">
    <location>
        <begin position="1"/>
        <end position="36"/>
    </location>
</feature>
<feature type="chain" id="PRO_0000405118" description="Santalene and bergamotene synthase, chloroplastic">
    <location>
        <begin position="37"/>
        <end position="777"/>
    </location>
</feature>
<feature type="short sequence motif" description="DDXXD motif">
    <location>
        <begin position="530"/>
        <end position="534"/>
    </location>
</feature>
<feature type="binding site" evidence="1">
    <location>
        <position position="530"/>
    </location>
    <ligand>
        <name>Mg(2+)</name>
        <dbReference type="ChEBI" id="CHEBI:18420"/>
        <label>1</label>
    </ligand>
</feature>
<feature type="binding site" evidence="1">
    <location>
        <position position="530"/>
    </location>
    <ligand>
        <name>Mg(2+)</name>
        <dbReference type="ChEBI" id="CHEBI:18420"/>
        <label>2</label>
    </ligand>
</feature>
<feature type="binding site" evidence="1">
    <location>
        <position position="534"/>
    </location>
    <ligand>
        <name>Mg(2+)</name>
        <dbReference type="ChEBI" id="CHEBI:18420"/>
        <label>1</label>
    </ligand>
</feature>
<feature type="binding site" evidence="1">
    <location>
        <position position="534"/>
    </location>
    <ligand>
        <name>Mg(2+)</name>
        <dbReference type="ChEBI" id="CHEBI:18420"/>
        <label>2</label>
    </ligand>
</feature>
<proteinExistence type="evidence at protein level"/>
<reference key="1">
    <citation type="journal article" date="2009" name="Plant Cell">
        <title>A novel pathway for sesquiterpene biosynthesis from Z,Z-farnesyl pyrophosphate in the wild tomato Solanum habrochaites.</title>
        <authorList>
            <person name="Sallaud C."/>
            <person name="Rontein D."/>
            <person name="Onillon S."/>
            <person name="Jabes F."/>
            <person name="Duffe P."/>
            <person name="Giacalone C."/>
            <person name="Thoraval S."/>
            <person name="Escoffier C."/>
            <person name="Herbette G."/>
            <person name="Leonhardt N."/>
            <person name="Causse M."/>
            <person name="Tissier A."/>
        </authorList>
    </citation>
    <scope>NUCLEOTIDE SEQUENCE [MRNA]</scope>
    <scope>CATALYTIC ACTIVITY</scope>
    <scope>SUBCELLULAR LOCATION</scope>
    <scope>FUNCTION</scope>
    <source>
        <tissue>Trichome gland</tissue>
    </source>
</reference>
<evidence type="ECO:0000250" key="1"/>
<evidence type="ECO:0000255" key="2"/>
<evidence type="ECO:0000269" key="3">
    <source>
    </source>
</evidence>
<evidence type="ECO:0000305" key="4"/>
<comment type="function">
    <text evidence="3">(2Z,6Z)-farnesyl diphosphate cyclizing enzyme. Produces (+)-alpha-santalene, (+)-endo-beta-bergamotene, (-)-endo-alpha-bergamotene, and at lower amounts, (-)exo-alpha-bergamotene and (+)-epi-beta-santalene. Not able to use geranyl diphosphate, E,E-farnesyl diphosphate or E,E,E-geranylgeranyl diphosphate as substrates, but able to use Neryl diphosphate to make the monoterpene terpineol.</text>
</comment>
<comment type="catalytic activity">
    <reaction evidence="3">
        <text>(2Z,6Z)-farnesyl diphosphate = (+)-alpha-santalene + diphosphate</text>
        <dbReference type="Rhea" id="RHEA:30463"/>
        <dbReference type="ChEBI" id="CHEBI:33019"/>
        <dbReference type="ChEBI" id="CHEBI:60374"/>
        <dbReference type="ChEBI" id="CHEBI:61677"/>
        <dbReference type="EC" id="4.2.3.50"/>
    </reaction>
</comment>
<comment type="catalytic activity">
    <reaction evidence="3">
        <text>(2Z,6Z)-farnesyl diphosphate = (+)-endo-beta-bergamotene + diphosphate</text>
        <dbReference type="Rhea" id="RHEA:30467"/>
        <dbReference type="ChEBI" id="CHEBI:33019"/>
        <dbReference type="ChEBI" id="CHEBI:60374"/>
        <dbReference type="ChEBI" id="CHEBI:61678"/>
        <dbReference type="EC" id="4.2.3.53"/>
    </reaction>
</comment>
<comment type="catalytic activity">
    <reaction evidence="3">
        <text>(2Z,6Z)-farnesyl diphosphate = (1S,5S,6S)-alpha-bergamotene + diphosphate</text>
        <dbReference type="Rhea" id="RHEA:30471"/>
        <dbReference type="ChEBI" id="CHEBI:33019"/>
        <dbReference type="ChEBI" id="CHEBI:60374"/>
        <dbReference type="ChEBI" id="CHEBI:61679"/>
        <dbReference type="EC" id="4.2.3.54"/>
    </reaction>
</comment>
<comment type="cofactor">
    <cofactor evidence="1">
        <name>Mg(2+)</name>
        <dbReference type="ChEBI" id="CHEBI:18420"/>
    </cofactor>
    <cofactor evidence="1">
        <name>Mn(2+)</name>
        <dbReference type="ChEBI" id="CHEBI:29035"/>
    </cofactor>
</comment>
<comment type="subcellular location">
    <subcellularLocation>
        <location evidence="3">Plastid</location>
        <location evidence="3">Chloroplast</location>
    </subcellularLocation>
</comment>
<comment type="domain">
    <text evidence="1">The Asp-Asp-Xaa-Xaa-Asp/Glu (DDXXD/E) motif is important for the catalytic activity, presumably through binding to Mg(2+).</text>
</comment>
<comment type="similarity">
    <text evidence="4">Belongs to the terpene synthase family. Tpse subfamily.</text>
</comment>
<sequence>MIVGYRSTIITLSHPKLGNGKTISSNAIFQRSCRVRCSHSTPSSMNGFEDARDRIRESFGKVELSPSSYDTAWVAMVPSKHSLNEPCFPQCLDWIIENQREDGSWGLNPSHPLLLKDSLSSTLACLLALTKWRVGDEQIKRGLGFIETQSWAIDNKDQISPLGFEIIFPSMIKSAEKLNLNLAINKRDSTIKRALQNEFTRNIEYMSEGVGELCDWKEIIKLHQRQNGSLFDSPATTAAALIYHQHDKKCYEYLNSILQQHKNWVPTMYPTKIHSLLCLVDTLQNLGVHRHFKSEIKKALDEIYRLWQQKNEQIFSNVTHCAMAFRLLRMSYYDVSSDELAEFVDEEHFFAISGKYTSHVEILELHKASQLAIDHEKDDILDKINNWTRTFMEQKLLNNGFIDRMSKKEVELALRKFYTISDLAENRRCIKSYEENNFKILKAAYRSPNIYNKDLFIFSIRNFELCQAQHQEELQQFKRWFEDYRLDQLGIAERYIHDTYLCAVIVVPEPELSDARLLYAKYVLLLTIVDDQFDSFASTDECLNIIELVERWDDYASVGYKSEKVKVFFSTLYKSIEELVTIAEIKQGRSVKNHLLNLWLELVKLMLMERVEWFSGKTIPSIEEYLYVTSITFGARLIPLTTQYFLGIKISEDILESDEIYGLCNCTGRVLRILNDLQDSKKEQKEDSVTIVTLLMKSMSEEEAIMKIKEILEMNRRELLKMVLVQKKGSQLPQICKDIFWRTSNWADFIYLQTDGYRIAEEMKNHIDEVFYKPLNH</sequence>
<accession>B8XA41</accession>
<name>SBS_SOLHA</name>
<keyword id="KW-0150">Chloroplast</keyword>
<keyword id="KW-0456">Lyase</keyword>
<keyword id="KW-0460">Magnesium</keyword>
<keyword id="KW-0464">Manganese</keyword>
<keyword id="KW-0479">Metal-binding</keyword>
<keyword id="KW-0934">Plastid</keyword>
<keyword id="KW-0809">Transit peptide</keyword>
<gene>
    <name type="primary">SBS</name>
</gene>
<protein>
    <recommendedName>
        <fullName>Santalene and bergamotene synthase, chloroplastic</fullName>
    </recommendedName>
    <alternativeName>
        <fullName>(+)-alpha-santalene synthase ((2Z,6Z)-farnesyl diphosphate cyclizing)</fullName>
        <ecNumber>4.2.3.50</ecNumber>
    </alternativeName>
    <alternativeName>
        <fullName>(+)-endo-beta-bergamotene synthase ((2Z,6Z)-farnesyl diphosphate cyclizing)</fullName>
        <ecNumber>4.2.3.53</ecNumber>
    </alternativeName>
    <alternativeName>
        <fullName>(-)-endo-alpha-bergamotene synthase ((2Z,6Z)-farnesyl diphosphate cyclizing)</fullName>
        <ecNumber>4.2.3.54</ecNumber>
    </alternativeName>
</protein>